<keyword id="KW-0966">Cell projection</keyword>
<keyword id="KW-0141">cGMP biosynthesis</keyword>
<keyword id="KW-1015">Disulfide bond</keyword>
<keyword id="KW-0342">GTP-binding</keyword>
<keyword id="KW-0456">Lyase</keyword>
<keyword id="KW-0472">Membrane</keyword>
<keyword id="KW-0547">Nucleotide-binding</keyword>
<keyword id="KW-1185">Reference proteome</keyword>
<keyword id="KW-0716">Sensory transduction</keyword>
<keyword id="KW-0732">Signal</keyword>
<keyword id="KW-0812">Transmembrane</keyword>
<keyword id="KW-1133">Transmembrane helix</keyword>
<keyword id="KW-0844">Vision</keyword>
<feature type="signal peptide" evidence="5">
    <location>
        <begin position="1"/>
        <end position="50"/>
    </location>
</feature>
<feature type="chain" id="PRO_0000280445" description="Retinal guanylyl cyclase 2">
    <location>
        <begin position="51"/>
        <end position="1108"/>
    </location>
</feature>
<feature type="topological domain" description="Extracellular" evidence="5">
    <location>
        <begin position="51"/>
        <end position="469"/>
    </location>
</feature>
<feature type="transmembrane region" description="Helical" evidence="5">
    <location>
        <begin position="470"/>
        <end position="490"/>
    </location>
</feature>
<feature type="topological domain" description="Cytoplasmic" evidence="5">
    <location>
        <begin position="491"/>
        <end position="1108"/>
    </location>
</feature>
<feature type="domain" description="Protein kinase" evidence="7">
    <location>
        <begin position="532"/>
        <end position="812"/>
    </location>
</feature>
<feature type="domain" description="Guanylate cyclase" evidence="6">
    <location>
        <begin position="884"/>
        <end position="1014"/>
    </location>
</feature>
<feature type="disulfide bond" evidence="1">
    <location>
        <begin position="104"/>
        <end position="132"/>
    </location>
</feature>
<feature type="disulfide bond" description="Interchain" evidence="1">
    <location>
        <position position="452"/>
    </location>
</feature>
<feature type="disulfide bond" description="Interchain" evidence="1">
    <location>
        <position position="460"/>
    </location>
</feature>
<evidence type="ECO:0000250" key="1"/>
<evidence type="ECO:0000250" key="2">
    <source>
        <dbReference type="UniProtKB" id="O02740"/>
    </source>
</evidence>
<evidence type="ECO:0000250" key="3">
    <source>
        <dbReference type="UniProtKB" id="P51841"/>
    </source>
</evidence>
<evidence type="ECO:0000250" key="4">
    <source>
        <dbReference type="UniProtKB" id="P51842"/>
    </source>
</evidence>
<evidence type="ECO:0000255" key="5"/>
<evidence type="ECO:0000255" key="6">
    <source>
        <dbReference type="PROSITE-ProRule" id="PRU00099"/>
    </source>
</evidence>
<evidence type="ECO:0000255" key="7">
    <source>
        <dbReference type="PROSITE-ProRule" id="PRU00159"/>
    </source>
</evidence>
<evidence type="ECO:0000269" key="8">
    <source>
    </source>
</evidence>
<evidence type="ECO:0000269" key="9">
    <source>
    </source>
</evidence>
<evidence type="ECO:0000303" key="10">
    <source>
    </source>
</evidence>
<evidence type="ECO:0000312" key="11">
    <source>
        <dbReference type="MGI" id="MGI:105119"/>
    </source>
</evidence>
<sequence>MFLGPWPFSRLLSWFAISSRLSGQHGLPSSKFLRCLCLLALLPLLRWGQALPYKIGVIGPWTCDPFFSKALPEVAAALAIERISRDKTFDRSYSFEYVILNEDCQTSKALASFISHQQMASGFVGPANPGFCEAASLLGTSWDKGIFSWACVNHELDNKHSFPTFSRTLPSPIRVLVTVMKYFQWAHAGVISSDEDIWMHTANRVSSALRSQGLPVGVVLTSGRDSQSIQKALQQIRQADRIRIIIMCMHSALIGGETQTHFLELAHDLKMTDGTYVFVPYDVLLYSLPYKHSPYQVLRNNPKLREAYDAVLTITVESHEKTFYEAYAEAAARGEIPEKPDSNQVSPLFGTIYNSIYFIAQAMNNAMKKNGRASAASLVQHSRNMQFYGFNQLIKTDSNGNGISEYVILDTNGKEWELRGTYTVDMETELLRFRGTPIHFPGGRPTSADAKCWFAERKICQGGIDPALAMMVCFALLIALLSINGFAYFIRRRINKIQLIKGPNRILLTLEDVTFINPHFGSKRGSRASVSFQIISEVQSGRSPRLSFSSGSLTPATYENSNIAIYEGDWVWLKKFPPGDFGDIKSIKSSASDVFEMMKDLRHENVNPLLGFFYDSGMFAIVSEFCSRRSLEDILTNDDVKLDWMFKSSLLLDLIKGMKYLHHREFIHGRLKSRNCVVDGRFVLKVTDYGFNDILEMLRLSEEEPSEEELLWTAPELLRAPGGIRLGSFAGDVYSFAIIMQEVMVRGAPFCMMDLPAKEIIDRLKMPPPVYRPVVSPEYAPAECLQLMKQCWAEASEQRPTFDEIFNQFKTFNKGKKTNIIDSMLRMLEQYSSNLEDLIRERTEELEIEKQKTEKLLTQMLPLSVAESLKKGCTVEPEGFDLVTLYFSDIVGFTTISAMSEPIEVVDLLNDLYTLFDAIIGSHDVYKVETIGDAYMVASGLPKRNGSRHAAEIANMSLDILSSVGTFKMRHMPEVPVRIRIGLHSGPVVAGVVGLTMPRYCLFGDTVNTASRMESTGLPYRIHVSLSTVTILQTLSEGYEVELRGRTELKGKGTEETFWLVGKKGFTKPLPVPPPVGKDGQVGHGLQPAEIAAFQRRKAERQLVRNKP</sequence>
<dbReference type="EC" id="4.6.1.2" evidence="2"/>
<dbReference type="EMBL" id="AY651761">
    <property type="protein sequence ID" value="AAV54098.1"/>
    <property type="molecule type" value="mRNA"/>
</dbReference>
<dbReference type="EMBL" id="AL671916">
    <property type="status" value="NOT_ANNOTATED_CDS"/>
    <property type="molecule type" value="Genomic_DNA"/>
</dbReference>
<dbReference type="EMBL" id="BX324191">
    <property type="status" value="NOT_ANNOTATED_CDS"/>
    <property type="molecule type" value="Genomic_DNA"/>
</dbReference>
<dbReference type="EMBL" id="BC115714">
    <property type="protein sequence ID" value="AAI15715.1"/>
    <property type="molecule type" value="mRNA"/>
</dbReference>
<dbReference type="EMBL" id="AK044234">
    <property type="protein sequence ID" value="BAC31833.1"/>
    <property type="molecule type" value="mRNA"/>
</dbReference>
<dbReference type="CCDS" id="CCDS30446.1"/>
<dbReference type="RefSeq" id="NP_001007577.1">
    <property type="nucleotide sequence ID" value="NM_001007576.2"/>
</dbReference>
<dbReference type="RefSeq" id="XP_006528904.1">
    <property type="nucleotide sequence ID" value="XM_006528841.5"/>
</dbReference>
<dbReference type="RefSeq" id="XP_036017858.1">
    <property type="nucleotide sequence ID" value="XM_036161965.1"/>
</dbReference>
<dbReference type="RefSeq" id="XP_036017859.1">
    <property type="nucleotide sequence ID" value="XM_036161966.1"/>
</dbReference>
<dbReference type="SMR" id="Q5SDA5"/>
<dbReference type="FunCoup" id="Q5SDA5">
    <property type="interactions" value="298"/>
</dbReference>
<dbReference type="IntAct" id="Q5SDA5">
    <property type="interactions" value="1"/>
</dbReference>
<dbReference type="STRING" id="10090.ENSMUSP00000044521"/>
<dbReference type="iPTMnet" id="Q5SDA5"/>
<dbReference type="PhosphoSitePlus" id="Q5SDA5"/>
<dbReference type="PaxDb" id="10090-ENSMUSP00000044521"/>
<dbReference type="ProteomicsDB" id="271368"/>
<dbReference type="Antibodypedia" id="29460">
    <property type="antibodies" value="108 antibodies from 18 providers"/>
</dbReference>
<dbReference type="DNASU" id="245650"/>
<dbReference type="Ensembl" id="ENSMUST00000042530.4">
    <property type="protein sequence ID" value="ENSMUSP00000044521.4"/>
    <property type="gene ID" value="ENSMUSG00000042282.5"/>
</dbReference>
<dbReference type="GeneID" id="245650"/>
<dbReference type="KEGG" id="mmu:245650"/>
<dbReference type="UCSC" id="uc009ulq.2">
    <property type="organism name" value="mouse"/>
</dbReference>
<dbReference type="AGR" id="MGI:105119"/>
<dbReference type="CTD" id="2986"/>
<dbReference type="MGI" id="MGI:105119">
    <property type="gene designation" value="Gucy2f"/>
</dbReference>
<dbReference type="VEuPathDB" id="HostDB:ENSMUSG00000042282"/>
<dbReference type="eggNOG" id="KOG1023">
    <property type="taxonomic scope" value="Eukaryota"/>
</dbReference>
<dbReference type="GeneTree" id="ENSGT00940000162146"/>
<dbReference type="HOGENOM" id="CLU_001072_1_0_1"/>
<dbReference type="InParanoid" id="Q5SDA5"/>
<dbReference type="OMA" id="QDSQSMR"/>
<dbReference type="OrthoDB" id="1890790at2759"/>
<dbReference type="PhylomeDB" id="Q5SDA5"/>
<dbReference type="TreeFam" id="TF106338"/>
<dbReference type="Reactome" id="R-MMU-2514859">
    <property type="pathway name" value="Inactivation, recovery and regulation of the phototransduction cascade"/>
</dbReference>
<dbReference type="BioGRID-ORCS" id="245650">
    <property type="hits" value="2 hits in 79 CRISPR screens"/>
</dbReference>
<dbReference type="PRO" id="PR:Q5SDA5"/>
<dbReference type="Proteomes" id="UP000000589">
    <property type="component" value="Chromosome X"/>
</dbReference>
<dbReference type="RNAct" id="Q5SDA5">
    <property type="molecule type" value="protein"/>
</dbReference>
<dbReference type="Bgee" id="ENSMUSG00000042282">
    <property type="expression patterns" value="Expressed in layer of retina and 10 other cell types or tissues"/>
</dbReference>
<dbReference type="GO" id="GO:0005886">
    <property type="term" value="C:plasma membrane"/>
    <property type="evidence" value="ECO:0007669"/>
    <property type="project" value="Ensembl"/>
</dbReference>
<dbReference type="GO" id="GO:0120200">
    <property type="term" value="C:rod photoreceptor outer segment"/>
    <property type="evidence" value="ECO:0000314"/>
    <property type="project" value="UniProtKB"/>
</dbReference>
<dbReference type="GO" id="GO:0005524">
    <property type="term" value="F:ATP binding"/>
    <property type="evidence" value="ECO:0007669"/>
    <property type="project" value="InterPro"/>
</dbReference>
<dbReference type="GO" id="GO:0005525">
    <property type="term" value="F:GTP binding"/>
    <property type="evidence" value="ECO:0007669"/>
    <property type="project" value="UniProtKB-KW"/>
</dbReference>
<dbReference type="GO" id="GO:0004383">
    <property type="term" value="F:guanylate cyclase activity"/>
    <property type="evidence" value="ECO:0007669"/>
    <property type="project" value="UniProtKB-EC"/>
</dbReference>
<dbReference type="GO" id="GO:0042802">
    <property type="term" value="F:identical protein binding"/>
    <property type="evidence" value="ECO:0007669"/>
    <property type="project" value="Ensembl"/>
</dbReference>
<dbReference type="GO" id="GO:0004672">
    <property type="term" value="F:protein kinase activity"/>
    <property type="evidence" value="ECO:0007669"/>
    <property type="project" value="InterPro"/>
</dbReference>
<dbReference type="GO" id="GO:0044877">
    <property type="term" value="F:protein-containing complex binding"/>
    <property type="evidence" value="ECO:0007669"/>
    <property type="project" value="Ensembl"/>
</dbReference>
<dbReference type="GO" id="GO:0019934">
    <property type="term" value="P:cGMP-mediated signaling"/>
    <property type="evidence" value="ECO:0007669"/>
    <property type="project" value="Ensembl"/>
</dbReference>
<dbReference type="GO" id="GO:0050908">
    <property type="term" value="P:detection of light stimulus involved in visual perception"/>
    <property type="evidence" value="ECO:0000315"/>
    <property type="project" value="CACAO"/>
</dbReference>
<dbReference type="CDD" id="cd07302">
    <property type="entry name" value="CHD"/>
    <property type="match status" value="1"/>
</dbReference>
<dbReference type="CDD" id="cd06371">
    <property type="entry name" value="PBP1_sensory_GC_DEF-like"/>
    <property type="match status" value="1"/>
</dbReference>
<dbReference type="FunFam" id="1.10.510.10:FF:000404">
    <property type="entry name" value="Guanylate cyclase"/>
    <property type="match status" value="1"/>
</dbReference>
<dbReference type="FunFam" id="3.30.70.1230:FF:000013">
    <property type="entry name" value="Guanylate cyclase"/>
    <property type="match status" value="1"/>
</dbReference>
<dbReference type="FunFam" id="3.40.50.2300:FF:000114">
    <property type="entry name" value="Guanylate cyclase"/>
    <property type="match status" value="1"/>
</dbReference>
<dbReference type="Gene3D" id="3.40.50.2300">
    <property type="match status" value="2"/>
</dbReference>
<dbReference type="Gene3D" id="3.30.70.1230">
    <property type="entry name" value="Nucleotide cyclase"/>
    <property type="match status" value="1"/>
</dbReference>
<dbReference type="Gene3D" id="1.10.510.10">
    <property type="entry name" value="Transferase(Phosphotransferase) domain 1"/>
    <property type="match status" value="1"/>
</dbReference>
<dbReference type="InterPro" id="IPR001054">
    <property type="entry name" value="A/G_cyclase"/>
</dbReference>
<dbReference type="InterPro" id="IPR018297">
    <property type="entry name" value="A/G_cyclase_CS"/>
</dbReference>
<dbReference type="InterPro" id="IPR001828">
    <property type="entry name" value="ANF_lig-bd_rcpt"/>
</dbReference>
<dbReference type="InterPro" id="IPR050401">
    <property type="entry name" value="Cyclic_nucleotide_synthase"/>
</dbReference>
<dbReference type="InterPro" id="IPR011009">
    <property type="entry name" value="Kinase-like_dom_sf"/>
</dbReference>
<dbReference type="InterPro" id="IPR029787">
    <property type="entry name" value="Nucleotide_cyclase"/>
</dbReference>
<dbReference type="InterPro" id="IPR028082">
    <property type="entry name" value="Peripla_BP_I"/>
</dbReference>
<dbReference type="InterPro" id="IPR000719">
    <property type="entry name" value="Prot_kinase_dom"/>
</dbReference>
<dbReference type="InterPro" id="IPR001245">
    <property type="entry name" value="Ser-Thr/Tyr_kinase_cat_dom"/>
</dbReference>
<dbReference type="PANTHER" id="PTHR11920">
    <property type="entry name" value="GUANYLYL CYCLASE"/>
    <property type="match status" value="1"/>
</dbReference>
<dbReference type="PANTHER" id="PTHR11920:SF349">
    <property type="entry name" value="RETINAL GUANYLYL CYCLASE 2"/>
    <property type="match status" value="1"/>
</dbReference>
<dbReference type="Pfam" id="PF01094">
    <property type="entry name" value="ANF_receptor"/>
    <property type="match status" value="1"/>
</dbReference>
<dbReference type="Pfam" id="PF00211">
    <property type="entry name" value="Guanylate_cyc"/>
    <property type="match status" value="1"/>
</dbReference>
<dbReference type="Pfam" id="PF07714">
    <property type="entry name" value="PK_Tyr_Ser-Thr"/>
    <property type="match status" value="1"/>
</dbReference>
<dbReference type="SMART" id="SM00044">
    <property type="entry name" value="CYCc"/>
    <property type="match status" value="1"/>
</dbReference>
<dbReference type="SUPFAM" id="SSF55073">
    <property type="entry name" value="Nucleotide cyclase"/>
    <property type="match status" value="1"/>
</dbReference>
<dbReference type="SUPFAM" id="SSF53822">
    <property type="entry name" value="Periplasmic binding protein-like I"/>
    <property type="match status" value="1"/>
</dbReference>
<dbReference type="SUPFAM" id="SSF56112">
    <property type="entry name" value="Protein kinase-like (PK-like)"/>
    <property type="match status" value="1"/>
</dbReference>
<dbReference type="PROSITE" id="PS00452">
    <property type="entry name" value="GUANYLATE_CYCLASE_1"/>
    <property type="match status" value="1"/>
</dbReference>
<dbReference type="PROSITE" id="PS50125">
    <property type="entry name" value="GUANYLATE_CYCLASE_2"/>
    <property type="match status" value="1"/>
</dbReference>
<dbReference type="PROSITE" id="PS50011">
    <property type="entry name" value="PROTEIN_KINASE_DOM"/>
    <property type="match status" value="1"/>
</dbReference>
<proteinExistence type="evidence at protein level"/>
<protein>
    <recommendedName>
        <fullName evidence="10">Retinal guanylyl cyclase 2</fullName>
        <ecNumber evidence="2">4.6.1.2</ecNumber>
    </recommendedName>
    <alternativeName>
        <fullName>Guanylate cyclase 2F</fullName>
    </alternativeName>
</protein>
<reference key="1">
    <citation type="journal article" date="2005" name="Genomics">
        <title>Application of functional genomic technologies in a mouse model of retinal degeneration.</title>
        <authorList>
            <person name="Shearstone J.R."/>
            <person name="Wang Y.E."/>
            <person name="Clement A."/>
            <person name="Allaire N.E."/>
            <person name="Yang C."/>
            <person name="Worley D.S."/>
            <person name="Carulli J.P."/>
            <person name="Perrin S."/>
        </authorList>
    </citation>
    <scope>NUCLEOTIDE SEQUENCE [MRNA]</scope>
    <source>
        <strain>C57BL/6J</strain>
        <tissue>Retina</tissue>
    </source>
</reference>
<reference key="2">
    <citation type="journal article" date="2009" name="PLoS Biol.">
        <title>Lineage-specific biology revealed by a finished genome assembly of the mouse.</title>
        <authorList>
            <person name="Church D.M."/>
            <person name="Goodstadt L."/>
            <person name="Hillier L.W."/>
            <person name="Zody M.C."/>
            <person name="Goldstein S."/>
            <person name="She X."/>
            <person name="Bult C.J."/>
            <person name="Agarwala R."/>
            <person name="Cherry J.L."/>
            <person name="DiCuccio M."/>
            <person name="Hlavina W."/>
            <person name="Kapustin Y."/>
            <person name="Meric P."/>
            <person name="Maglott D."/>
            <person name="Birtle Z."/>
            <person name="Marques A.C."/>
            <person name="Graves T."/>
            <person name="Zhou S."/>
            <person name="Teague B."/>
            <person name="Potamousis K."/>
            <person name="Churas C."/>
            <person name="Place M."/>
            <person name="Herschleb J."/>
            <person name="Runnheim R."/>
            <person name="Forrest D."/>
            <person name="Amos-Landgraf J."/>
            <person name="Schwartz D.C."/>
            <person name="Cheng Z."/>
            <person name="Lindblad-Toh K."/>
            <person name="Eichler E.E."/>
            <person name="Ponting C.P."/>
        </authorList>
    </citation>
    <scope>NUCLEOTIDE SEQUENCE [LARGE SCALE GENOMIC DNA]</scope>
    <source>
        <strain>C57BL/6J</strain>
    </source>
</reference>
<reference key="3">
    <citation type="journal article" date="2004" name="Genome Res.">
        <title>The status, quality, and expansion of the NIH full-length cDNA project: the Mammalian Gene Collection (MGC).</title>
        <authorList>
            <consortium name="The MGC Project Team"/>
        </authorList>
    </citation>
    <scope>NUCLEOTIDE SEQUENCE [LARGE SCALE MRNA]</scope>
</reference>
<reference key="4">
    <citation type="journal article" date="2005" name="Science">
        <title>The transcriptional landscape of the mammalian genome.</title>
        <authorList>
            <person name="Carninci P."/>
            <person name="Kasukawa T."/>
            <person name="Katayama S."/>
            <person name="Gough J."/>
            <person name="Frith M.C."/>
            <person name="Maeda N."/>
            <person name="Oyama R."/>
            <person name="Ravasi T."/>
            <person name="Lenhard B."/>
            <person name="Wells C."/>
            <person name="Kodzius R."/>
            <person name="Shimokawa K."/>
            <person name="Bajic V.B."/>
            <person name="Brenner S.E."/>
            <person name="Batalov S."/>
            <person name="Forrest A.R."/>
            <person name="Zavolan M."/>
            <person name="Davis M.J."/>
            <person name="Wilming L.G."/>
            <person name="Aidinis V."/>
            <person name="Allen J.E."/>
            <person name="Ambesi-Impiombato A."/>
            <person name="Apweiler R."/>
            <person name="Aturaliya R.N."/>
            <person name="Bailey T.L."/>
            <person name="Bansal M."/>
            <person name="Baxter L."/>
            <person name="Beisel K.W."/>
            <person name="Bersano T."/>
            <person name="Bono H."/>
            <person name="Chalk A.M."/>
            <person name="Chiu K.P."/>
            <person name="Choudhary V."/>
            <person name="Christoffels A."/>
            <person name="Clutterbuck D.R."/>
            <person name="Crowe M.L."/>
            <person name="Dalla E."/>
            <person name="Dalrymple B.P."/>
            <person name="de Bono B."/>
            <person name="Della Gatta G."/>
            <person name="di Bernardo D."/>
            <person name="Down T."/>
            <person name="Engstrom P."/>
            <person name="Fagiolini M."/>
            <person name="Faulkner G."/>
            <person name="Fletcher C.F."/>
            <person name="Fukushima T."/>
            <person name="Furuno M."/>
            <person name="Futaki S."/>
            <person name="Gariboldi M."/>
            <person name="Georgii-Hemming P."/>
            <person name="Gingeras T.R."/>
            <person name="Gojobori T."/>
            <person name="Green R.E."/>
            <person name="Gustincich S."/>
            <person name="Harbers M."/>
            <person name="Hayashi Y."/>
            <person name="Hensch T.K."/>
            <person name="Hirokawa N."/>
            <person name="Hill D."/>
            <person name="Huminiecki L."/>
            <person name="Iacono M."/>
            <person name="Ikeo K."/>
            <person name="Iwama A."/>
            <person name="Ishikawa T."/>
            <person name="Jakt M."/>
            <person name="Kanapin A."/>
            <person name="Katoh M."/>
            <person name="Kawasawa Y."/>
            <person name="Kelso J."/>
            <person name="Kitamura H."/>
            <person name="Kitano H."/>
            <person name="Kollias G."/>
            <person name="Krishnan S.P."/>
            <person name="Kruger A."/>
            <person name="Kummerfeld S.K."/>
            <person name="Kurochkin I.V."/>
            <person name="Lareau L.F."/>
            <person name="Lazarevic D."/>
            <person name="Lipovich L."/>
            <person name="Liu J."/>
            <person name="Liuni S."/>
            <person name="McWilliam S."/>
            <person name="Madan Babu M."/>
            <person name="Madera M."/>
            <person name="Marchionni L."/>
            <person name="Matsuda H."/>
            <person name="Matsuzawa S."/>
            <person name="Miki H."/>
            <person name="Mignone F."/>
            <person name="Miyake S."/>
            <person name="Morris K."/>
            <person name="Mottagui-Tabar S."/>
            <person name="Mulder N."/>
            <person name="Nakano N."/>
            <person name="Nakauchi H."/>
            <person name="Ng P."/>
            <person name="Nilsson R."/>
            <person name="Nishiguchi S."/>
            <person name="Nishikawa S."/>
            <person name="Nori F."/>
            <person name="Ohara O."/>
            <person name="Okazaki Y."/>
            <person name="Orlando V."/>
            <person name="Pang K.C."/>
            <person name="Pavan W.J."/>
            <person name="Pavesi G."/>
            <person name="Pesole G."/>
            <person name="Petrovsky N."/>
            <person name="Piazza S."/>
            <person name="Reed J."/>
            <person name="Reid J.F."/>
            <person name="Ring B.Z."/>
            <person name="Ringwald M."/>
            <person name="Rost B."/>
            <person name="Ruan Y."/>
            <person name="Salzberg S.L."/>
            <person name="Sandelin A."/>
            <person name="Schneider C."/>
            <person name="Schoenbach C."/>
            <person name="Sekiguchi K."/>
            <person name="Semple C.A."/>
            <person name="Seno S."/>
            <person name="Sessa L."/>
            <person name="Sheng Y."/>
            <person name="Shibata Y."/>
            <person name="Shimada H."/>
            <person name="Shimada K."/>
            <person name="Silva D."/>
            <person name="Sinclair B."/>
            <person name="Sperling S."/>
            <person name="Stupka E."/>
            <person name="Sugiura K."/>
            <person name="Sultana R."/>
            <person name="Takenaka Y."/>
            <person name="Taki K."/>
            <person name="Tammoja K."/>
            <person name="Tan S.L."/>
            <person name="Tang S."/>
            <person name="Taylor M.S."/>
            <person name="Tegner J."/>
            <person name="Teichmann S.A."/>
            <person name="Ueda H.R."/>
            <person name="van Nimwegen E."/>
            <person name="Verardo R."/>
            <person name="Wei C.L."/>
            <person name="Yagi K."/>
            <person name="Yamanishi H."/>
            <person name="Zabarovsky E."/>
            <person name="Zhu S."/>
            <person name="Zimmer A."/>
            <person name="Hide W."/>
            <person name="Bult C."/>
            <person name="Grimmond S.M."/>
            <person name="Teasdale R.D."/>
            <person name="Liu E.T."/>
            <person name="Brusic V."/>
            <person name="Quackenbush J."/>
            <person name="Wahlestedt C."/>
            <person name="Mattick J.S."/>
            <person name="Hume D.A."/>
            <person name="Kai C."/>
            <person name="Sasaki D."/>
            <person name="Tomaru Y."/>
            <person name="Fukuda S."/>
            <person name="Kanamori-Katayama M."/>
            <person name="Suzuki M."/>
            <person name="Aoki J."/>
            <person name="Arakawa T."/>
            <person name="Iida J."/>
            <person name="Imamura K."/>
            <person name="Itoh M."/>
            <person name="Kato T."/>
            <person name="Kawaji H."/>
            <person name="Kawagashira N."/>
            <person name="Kawashima T."/>
            <person name="Kojima M."/>
            <person name="Kondo S."/>
            <person name="Konno H."/>
            <person name="Nakano K."/>
            <person name="Ninomiya N."/>
            <person name="Nishio T."/>
            <person name="Okada M."/>
            <person name="Plessy C."/>
            <person name="Shibata K."/>
            <person name="Shiraki T."/>
            <person name="Suzuki S."/>
            <person name="Tagami M."/>
            <person name="Waki K."/>
            <person name="Watahiki A."/>
            <person name="Okamura-Oho Y."/>
            <person name="Suzuki H."/>
            <person name="Kawai J."/>
            <person name="Hayashizaki Y."/>
        </authorList>
    </citation>
    <scope>NUCLEOTIDE SEQUENCE [LARGE SCALE MRNA] OF 1-846</scope>
    <source>
        <strain>C57BL/6J</strain>
        <tissue>Retina</tissue>
    </source>
</reference>
<reference key="5">
    <citation type="journal article" date="2007" name="J. Biol. Chem.">
        <title>The function of guanylate cyclase 1 and guanylate cyclase 2 in rod and cone photoreceptors.</title>
        <authorList>
            <person name="Baehr W."/>
            <person name="Karan S."/>
            <person name="Maeda T."/>
            <person name="Luo D.G."/>
            <person name="Li S."/>
            <person name="Bronson J.D."/>
            <person name="Watt C.B."/>
            <person name="Yau K.W."/>
            <person name="Frederick J.M."/>
            <person name="Palczewski K."/>
        </authorList>
    </citation>
    <scope>DISRUPTION PHENOTYPE</scope>
    <scope>FUNCTION</scope>
</reference>
<reference key="6">
    <citation type="journal article" date="2010" name="Proc. Natl. Acad. Sci. U.S.A.">
        <title>RD3, the protein associated with Leber congenital amaurosis type 12, is required for guanylate cyclase trafficking in photoreceptor cells.</title>
        <authorList>
            <person name="Azadi S."/>
            <person name="Molday L.L."/>
            <person name="Molday R.S."/>
        </authorList>
    </citation>
    <scope>SUBCELLULAR LOCATION</scope>
    <scope>INTERACTION WITH RD3</scope>
    <scope>TISSUE SPECIFICITY</scope>
</reference>
<organism>
    <name type="scientific">Mus musculus</name>
    <name type="common">Mouse</name>
    <dbReference type="NCBI Taxonomy" id="10090"/>
    <lineage>
        <taxon>Eukaryota</taxon>
        <taxon>Metazoa</taxon>
        <taxon>Chordata</taxon>
        <taxon>Craniata</taxon>
        <taxon>Vertebrata</taxon>
        <taxon>Euteleostomi</taxon>
        <taxon>Mammalia</taxon>
        <taxon>Eutheria</taxon>
        <taxon>Euarchontoglires</taxon>
        <taxon>Glires</taxon>
        <taxon>Rodentia</taxon>
        <taxon>Myomorpha</taxon>
        <taxon>Muroidea</taxon>
        <taxon>Muridae</taxon>
        <taxon>Murinae</taxon>
        <taxon>Mus</taxon>
        <taxon>Mus</taxon>
    </lineage>
</organism>
<comment type="function">
    <text evidence="2 8">Responsible for the synthesis of cyclic GMP (cGMP) in rods and cones of photoreceptors (By similarity). Plays an essential role in phototransduction, by mediating cGMP replenishment. May also participate in the trafficking of membrane-asociated proteins to the photoreceptor outer segment membrane (PubMed:17255100).</text>
</comment>
<comment type="catalytic activity">
    <reaction evidence="2">
        <text>GTP = 3',5'-cyclic GMP + diphosphate</text>
        <dbReference type="Rhea" id="RHEA:13665"/>
        <dbReference type="ChEBI" id="CHEBI:33019"/>
        <dbReference type="ChEBI" id="CHEBI:37565"/>
        <dbReference type="ChEBI" id="CHEBI:57746"/>
        <dbReference type="EC" id="4.6.1.2"/>
    </reaction>
</comment>
<comment type="activity regulation">
    <text evidence="2 3">Activated by GUCA1B when free calcium ions concentration is low, and inhibited by GUCA1B when free calcium ions concentration is high (By similarity). Inhibited by RD3 (By similarity).</text>
</comment>
<comment type="subunit">
    <text evidence="4 9">Homodimer (By similarity). Interacts with RD3; promotes the exit of GUCY2F from the endoplasmic reticulum and its trafficking to the photoreceptor outer segments (PubMed:21078983).</text>
</comment>
<comment type="subcellular location">
    <subcellularLocation>
        <location evidence="4">Membrane</location>
        <topology evidence="5">Single-pass type I membrane protein</topology>
    </subcellularLocation>
    <subcellularLocation>
        <location evidence="9">Photoreceptor outer segment membrane</location>
        <topology evidence="5">Single-pass type I membrane protein</topology>
    </subcellularLocation>
</comment>
<comment type="tissue specificity">
    <text evidence="9">Retina.</text>
</comment>
<comment type="domain">
    <text>The protein kinase domain is predicted to be catalytically inactive.</text>
</comment>
<comment type="PTM">
    <text evidence="1">There are 9 conserved cysteine residues in sensory guanylate cyclases, 6 in the extracellular domain, which may be involved in intra- or interchain disulfide bonds.</text>
</comment>
<comment type="disruption phenotype">
    <text evidence="8">Deficient mice exhibit normal retinal morphology. Electroretinography shows slower recovery of rod from intense illumination. GUCY2F and GUCY2E double knockout mice does not show any photoresponse at 4 weeks of age, rods and cones degenerate at about 2 month of age and the intracellular transport of some phototransduction proteins is impaired.</text>
</comment>
<comment type="similarity">
    <text evidence="6">Belongs to the adenylyl cyclase class-4/guanylyl cyclase family.</text>
</comment>
<gene>
    <name evidence="11" type="primary">Gucy2f</name>
</gene>
<name>GUC2F_MOUSE</name>
<accession>Q5SDA5</accession>
<accession>Q8BLL8</accession>